<evidence type="ECO:0000255" key="1">
    <source>
        <dbReference type="HAMAP-Rule" id="MF_01616"/>
    </source>
</evidence>
<proteinExistence type="inferred from homology"/>
<dbReference type="EC" id="4.2.2.n1" evidence="1"/>
<dbReference type="EMBL" id="CP000569">
    <property type="protein sequence ID" value="ABN74825.1"/>
    <property type="molecule type" value="Genomic_DNA"/>
</dbReference>
<dbReference type="RefSeq" id="WP_005599253.1">
    <property type="nucleotide sequence ID" value="NC_009053.1"/>
</dbReference>
<dbReference type="SMR" id="A3N339"/>
<dbReference type="STRING" id="416269.APL_1741"/>
<dbReference type="CAZy" id="GH23">
    <property type="family name" value="Glycoside Hydrolase Family 23"/>
</dbReference>
<dbReference type="EnsemblBacteria" id="ABN74825">
    <property type="protein sequence ID" value="ABN74825"/>
    <property type="gene ID" value="APL_1741"/>
</dbReference>
<dbReference type="GeneID" id="48600031"/>
<dbReference type="KEGG" id="apl:APL_1741"/>
<dbReference type="eggNOG" id="COG0741">
    <property type="taxonomic scope" value="Bacteria"/>
</dbReference>
<dbReference type="HOGENOM" id="CLU_044583_0_0_6"/>
<dbReference type="Proteomes" id="UP000001432">
    <property type="component" value="Chromosome"/>
</dbReference>
<dbReference type="GO" id="GO:0009279">
    <property type="term" value="C:cell outer membrane"/>
    <property type="evidence" value="ECO:0007669"/>
    <property type="project" value="UniProtKB-SubCell"/>
</dbReference>
<dbReference type="GO" id="GO:0016798">
    <property type="term" value="F:hydrolase activity, acting on glycosyl bonds"/>
    <property type="evidence" value="ECO:0007669"/>
    <property type="project" value="InterPro"/>
</dbReference>
<dbReference type="GO" id="GO:0008933">
    <property type="term" value="F:peptidoglycan lytic transglycosylase activity"/>
    <property type="evidence" value="ECO:0007669"/>
    <property type="project" value="UniProtKB-UniRule"/>
</dbReference>
<dbReference type="GO" id="GO:0016998">
    <property type="term" value="P:cell wall macromolecule catabolic process"/>
    <property type="evidence" value="ECO:0007669"/>
    <property type="project" value="UniProtKB-UniRule"/>
</dbReference>
<dbReference type="GO" id="GO:0071555">
    <property type="term" value="P:cell wall organization"/>
    <property type="evidence" value="ECO:0007669"/>
    <property type="project" value="UniProtKB-KW"/>
</dbReference>
<dbReference type="GO" id="GO:0000270">
    <property type="term" value="P:peptidoglycan metabolic process"/>
    <property type="evidence" value="ECO:0007669"/>
    <property type="project" value="InterPro"/>
</dbReference>
<dbReference type="CDD" id="cd16893">
    <property type="entry name" value="LT_MltC_MltE"/>
    <property type="match status" value="1"/>
</dbReference>
<dbReference type="Gene3D" id="1.10.530.10">
    <property type="match status" value="1"/>
</dbReference>
<dbReference type="HAMAP" id="MF_01616">
    <property type="entry name" value="MltC"/>
    <property type="match status" value="1"/>
</dbReference>
<dbReference type="InterPro" id="IPR023346">
    <property type="entry name" value="Lysozyme-like_dom_sf"/>
</dbReference>
<dbReference type="InterPro" id="IPR023664">
    <property type="entry name" value="Murein_transglycosylaseC"/>
</dbReference>
<dbReference type="InterPro" id="IPR024570">
    <property type="entry name" value="Murein_transglycosylaseC_N"/>
</dbReference>
<dbReference type="InterPro" id="IPR000189">
    <property type="entry name" value="Transglyc_AS"/>
</dbReference>
<dbReference type="InterPro" id="IPR008258">
    <property type="entry name" value="Transglycosylase_SLT_dom_1"/>
</dbReference>
<dbReference type="NCBIfam" id="NF008670">
    <property type="entry name" value="PRK11671.1"/>
    <property type="match status" value="1"/>
</dbReference>
<dbReference type="PANTHER" id="PTHR37423:SF2">
    <property type="entry name" value="MEMBRANE-BOUND LYTIC MUREIN TRANSGLYCOSYLASE C"/>
    <property type="match status" value="1"/>
</dbReference>
<dbReference type="PANTHER" id="PTHR37423">
    <property type="entry name" value="SOLUBLE LYTIC MUREIN TRANSGLYCOSYLASE-RELATED"/>
    <property type="match status" value="1"/>
</dbReference>
<dbReference type="Pfam" id="PF11873">
    <property type="entry name" value="Mltc_N"/>
    <property type="match status" value="1"/>
</dbReference>
<dbReference type="Pfam" id="PF01464">
    <property type="entry name" value="SLT"/>
    <property type="match status" value="1"/>
</dbReference>
<dbReference type="SUPFAM" id="SSF53955">
    <property type="entry name" value="Lysozyme-like"/>
    <property type="match status" value="1"/>
</dbReference>
<dbReference type="PROSITE" id="PS51257">
    <property type="entry name" value="PROKAR_LIPOPROTEIN"/>
    <property type="match status" value="1"/>
</dbReference>
<dbReference type="PROSITE" id="PS00922">
    <property type="entry name" value="TRANSGLYCOSYLASE"/>
    <property type="match status" value="1"/>
</dbReference>
<organism>
    <name type="scientific">Actinobacillus pleuropneumoniae serotype 5b (strain L20)</name>
    <dbReference type="NCBI Taxonomy" id="416269"/>
    <lineage>
        <taxon>Bacteria</taxon>
        <taxon>Pseudomonadati</taxon>
        <taxon>Pseudomonadota</taxon>
        <taxon>Gammaproteobacteria</taxon>
        <taxon>Pasteurellales</taxon>
        <taxon>Pasteurellaceae</taxon>
        <taxon>Actinobacillus</taxon>
    </lineage>
</organism>
<protein>
    <recommendedName>
        <fullName evidence="1">Membrane-bound lytic murein transglycosylase C</fullName>
        <ecNumber evidence="1">4.2.2.n1</ecNumber>
    </recommendedName>
    <alternativeName>
        <fullName evidence="1">Murein lyase C</fullName>
    </alternativeName>
</protein>
<gene>
    <name evidence="1" type="primary">mltC</name>
    <name type="ordered locus">APL_1741</name>
</gene>
<sequence length="365" mass="41061">MKKYTKYLPLLLIIPFLAACGSSSPKKSKRTKTRVDYNTKDTNGLDILTGQFSHNIDDIWGSNELLVASKKDYVKYTDKFYTRSHISFEDGQITIETLGDQNHLRNSIIHTLLMGSDPKGIDLFASGDAPISSNPFLAGQVNDQFGRDINNIAIANDFATYLIQNKLQTRRLQNGRTVTYVAIKMVAGHIEVRARQYLPLVRKMAKRYGIEPSLILGIMEVESAFNPYAVSYANAIGLMQVVPRTAGRDIFARKGFDGQPDRAYLYNPSQNIDSGTLYLAILRDEYLEGITNPTAKRYAMISAYNSGAGAVLKVFDYDKYDAIDRINELSPDAVYRILTTAHPSSQARNYLKKVSKAREKYLHIR</sequence>
<keyword id="KW-0998">Cell outer membrane</keyword>
<keyword id="KW-0961">Cell wall biogenesis/degradation</keyword>
<keyword id="KW-0449">Lipoprotein</keyword>
<keyword id="KW-0456">Lyase</keyword>
<keyword id="KW-0472">Membrane</keyword>
<keyword id="KW-0564">Palmitate</keyword>
<keyword id="KW-1185">Reference proteome</keyword>
<keyword id="KW-0732">Signal</keyword>
<feature type="signal peptide" evidence="1">
    <location>
        <begin position="1"/>
        <end position="19"/>
    </location>
</feature>
<feature type="chain" id="PRO_1000069472" description="Membrane-bound lytic murein transglycosylase C">
    <location>
        <begin position="20"/>
        <end position="365"/>
    </location>
</feature>
<feature type="lipid moiety-binding region" description="N-palmitoyl cysteine" evidence="1">
    <location>
        <position position="20"/>
    </location>
</feature>
<feature type="lipid moiety-binding region" description="S-diacylglycerol cysteine" evidence="1">
    <location>
        <position position="20"/>
    </location>
</feature>
<accession>A3N339</accession>
<name>MLTC_ACTP2</name>
<comment type="function">
    <text evidence="1">Murein-degrading enzyme. May play a role in recycling of muropeptides during cell elongation and/or cell division.</text>
</comment>
<comment type="catalytic activity">
    <reaction evidence="1">
        <text>Exolytic cleavage of the (1-&gt;4)-beta-glycosidic linkage between N-acetylmuramic acid (MurNAc) and N-acetylglucosamine (GlcNAc) residues in peptidoglycan, from either the reducing or the non-reducing ends of the peptidoglycan chains, with concomitant formation of a 1,6-anhydrobond in the MurNAc residue.</text>
        <dbReference type="EC" id="4.2.2.n1"/>
    </reaction>
</comment>
<comment type="subcellular location">
    <subcellularLocation>
        <location evidence="1">Cell outer membrane</location>
        <topology evidence="1">Lipid-anchor</topology>
    </subcellularLocation>
</comment>
<comment type="similarity">
    <text evidence="1">Belongs to the transglycosylase Slt family.</text>
</comment>
<reference key="1">
    <citation type="journal article" date="2008" name="J. Bacteriol.">
        <title>The complete genome sequence of Actinobacillus pleuropneumoniae L20 (serotype 5b).</title>
        <authorList>
            <person name="Foote S.J."/>
            <person name="Bosse J.T."/>
            <person name="Bouevitch A.B."/>
            <person name="Langford P.R."/>
            <person name="Young N.M."/>
            <person name="Nash J.H.E."/>
        </authorList>
    </citation>
    <scope>NUCLEOTIDE SEQUENCE [LARGE SCALE GENOMIC DNA]</scope>
    <source>
        <strain>L20</strain>
    </source>
</reference>